<evidence type="ECO:0000256" key="1">
    <source>
        <dbReference type="SAM" id="MobiDB-lite"/>
    </source>
</evidence>
<evidence type="ECO:0000269" key="2">
    <source>
    </source>
</evidence>
<evidence type="ECO:0000269" key="3">
    <source>
    </source>
</evidence>
<evidence type="ECO:0000269" key="4">
    <source>
    </source>
</evidence>
<evidence type="ECO:0000269" key="5">
    <source>
    </source>
</evidence>
<evidence type="ECO:0000269" key="6">
    <source>
    </source>
</evidence>
<evidence type="ECO:0000269" key="7">
    <source>
    </source>
</evidence>
<evidence type="ECO:0000269" key="8">
    <source>
    </source>
</evidence>
<evidence type="ECO:0000269" key="9">
    <source>
    </source>
</evidence>
<evidence type="ECO:0000269" key="10">
    <source>
    </source>
</evidence>
<evidence type="ECO:0000269" key="11">
    <source>
    </source>
</evidence>
<evidence type="ECO:0000305" key="12"/>
<evidence type="ECO:0007829" key="13">
    <source>
        <dbReference type="PDB" id="1T6L"/>
    </source>
</evidence>
<evidence type="ECO:0007829" key="14">
    <source>
        <dbReference type="PDB" id="1YYP"/>
    </source>
</evidence>
<gene>
    <name type="primary">UL44</name>
</gene>
<reference key="1">
    <citation type="journal article" date="1989" name="J. Virol.">
        <title>Regulation of cytomegalovirus late-gene expression: differential use of three start sites in the transcriptional activation of ICP36 gene expression.</title>
        <authorList>
            <person name="Leach F.S."/>
            <person name="Mocarski E.S."/>
        </authorList>
    </citation>
    <scope>NUCLEOTIDE SEQUENCE [GENOMIC DNA] OF 1-27</scope>
</reference>
<reference key="2">
    <citation type="journal article" date="1990" name="Curr. Top. Microbiol. Immunol.">
        <title>Analysis of the protein-coding content of the sequence of human cytomegalovirus strain AD169.</title>
        <authorList>
            <person name="Chee M.S."/>
            <person name="Bankier A.T."/>
            <person name="Beck S."/>
            <person name="Bohni R."/>
            <person name="Brown C.M."/>
            <person name="Cerny R."/>
            <person name="Horsnell T."/>
            <person name="Hutchison C.A. III"/>
            <person name="Kouzarides T."/>
            <person name="Martignetti J.A."/>
            <person name="Preddie E."/>
            <person name="Satchwell S.C."/>
            <person name="Tomlinson P."/>
            <person name="Weston K.M."/>
            <person name="Barrell B.G."/>
        </authorList>
    </citation>
    <scope>NUCLEOTIDE SEQUENCE [LARGE SCALE GENOMIC DNA]</scope>
</reference>
<reference key="3">
    <citation type="journal article" date="2003" name="J. Gen. Virol.">
        <title>The human cytomegalovirus genome revisited: comparison with the chimpanzee cytomegalovirus genome.</title>
        <authorList>
            <person name="Davison A.J."/>
            <person name="Dolan A."/>
            <person name="Akter P."/>
            <person name="Addison C."/>
            <person name="Dargan D.J."/>
            <person name="Alcendor D.J."/>
            <person name="McGeoch D.J."/>
            <person name="Hayward G.S."/>
        </authorList>
    </citation>
    <scope>GENOME REANNOTATION</scope>
</reference>
<reference key="4">
    <citation type="journal article" date="2003" name="J. Gen. Virol.">
        <authorList>
            <person name="Davison A.J."/>
            <person name="Dolan A."/>
            <person name="Akter P."/>
            <person name="Addison C."/>
            <person name="Dargan D.J."/>
            <person name="Alcendor D.J."/>
            <person name="McGeoch D.J."/>
            <person name="Hayward G.S."/>
        </authorList>
    </citation>
    <scope>ERRATUM OF PUBMED:12533697</scope>
</reference>
<reference key="5">
    <citation type="journal article" date="2004" name="J. Virol.">
        <title>Residues of human cytomegalovirus DNA polymerase catalytic subunit UL54 that are necessary and sufficient for interaction with the accessory protein UL44.</title>
        <authorList>
            <person name="Loregian A."/>
            <person name="Appleton B.A."/>
            <person name="Hogle J.M."/>
            <person name="Coen D.M."/>
        </authorList>
    </citation>
    <scope>INTERACTION WITH UL54</scope>
    <scope>MUTAGENESIS OF ILE-135</scope>
</reference>
<reference key="6">
    <citation type="journal article" date="2004" name="J. Virol.">
        <title>Identification of proteins in human cytomegalovirus (HCMV) particles: the HCMV proteome.</title>
        <authorList>
            <person name="Varnum S.M."/>
            <person name="Streblow D.N."/>
            <person name="Monroe M.E."/>
            <person name="Smith P."/>
            <person name="Auberry K.J."/>
            <person name="Pasa-Tolic L."/>
            <person name="Wang D."/>
            <person name="Camp D.G. II"/>
            <person name="Rodland K."/>
            <person name="Wiley S."/>
            <person name="Britt W."/>
            <person name="Shenk T."/>
            <person name="Smith R.D."/>
            <person name="Nelson J.A."/>
        </authorList>
    </citation>
    <scope>IDENTIFICATION</scope>
</reference>
<reference key="7">
    <citation type="journal article" date="2004" name="J. Virol.">
        <authorList>
            <person name="Varnum S.M."/>
            <person name="Streblow D.N."/>
            <person name="Monroe M.E."/>
            <person name="Smith P."/>
            <person name="Auberry K.J."/>
            <person name="Pasa-Tolic L."/>
            <person name="Wang D."/>
            <person name="Camp D.G. II"/>
            <person name="Rodland K."/>
            <person name="Wiley S."/>
            <person name="Britt W."/>
            <person name="Shenk T."/>
            <person name="Smith R.D."/>
            <person name="Nelson J.A."/>
        </authorList>
    </citation>
    <scope>ERRATUM OF PUBMED:15452216</scope>
</reference>
<reference key="8">
    <citation type="journal article" date="2008" name="J. Virol.">
        <title>Role of homodimerization of human cytomegalovirus DNA polymerase accessory protein UL44 in origin-dependent DNA replication in cells.</title>
        <authorList>
            <person name="Sinigalia E."/>
            <person name="Alvisi G."/>
            <person name="Mercorelli B."/>
            <person name="Coen D.M."/>
            <person name="Pari G.S."/>
            <person name="Jans D.A."/>
            <person name="Ripalti A."/>
            <person name="Palu G."/>
            <person name="Loregian A."/>
        </authorList>
    </citation>
    <scope>OLIGOMERIZATION</scope>
</reference>
<reference key="9">
    <citation type="journal article" date="2008" name="J. Mol. Biol.">
        <title>Characterization of human cytomegalovirus uracil DNA glycosylase (UL114) and its interaction with polymerase processivity factor (UL44).</title>
        <authorList>
            <person name="Ranneberg-Nilsen T."/>
            <person name="Dale H.A."/>
            <person name="Luna L."/>
            <person name="Slettebakk R."/>
            <person name="Sundheim O."/>
            <person name="Rollag H."/>
            <person name="Bjoras M."/>
        </authorList>
    </citation>
    <scope>INTERACTION WITH UL114</scope>
</reference>
<reference key="10">
    <citation type="journal article" date="2009" name="J. Virol.">
        <title>Analysis of the association of the human cytomegalovirus DNA polymerase subunit UL44 with the viral DNA replication factor UL84.</title>
        <authorList>
            <person name="Strang B.L."/>
            <person name="Sinigalia E."/>
            <person name="Silva L.A."/>
            <person name="Coen D.M."/>
            <person name="Loregian A."/>
        </authorList>
    </citation>
    <scope>INTERACTION WITH UL84</scope>
</reference>
<reference key="11">
    <citation type="journal article" date="2010" name="J. Virol.">
        <title>Role of the specific interaction of UL112-113 p84 with UL44 DNA polymerase processivity factor in promoting DNA replication of human cytomegalovirus.</title>
        <authorList>
            <person name="Kim Y.E."/>
            <person name="Ahn J.H."/>
        </authorList>
    </citation>
    <scope>INTERACTION WITH UL112/113</scope>
    <scope>FUNCTION</scope>
</reference>
<reference key="12">
    <citation type="journal article" date="2010" name="J. Virol.">
        <title>The carboxy-terminal segment of the human cytomegalovirus DNA polymerase accessory subunit UL44 is crucial for viral replication.</title>
        <authorList>
            <person name="Silva L.A."/>
            <person name="Loregian A."/>
            <person name="Pari G.S."/>
            <person name="Strang B.L."/>
            <person name="Coen D.M."/>
        </authorList>
    </citation>
    <scope>SUBCELLULAR LOCATION</scope>
    <scope>FUNCTION</scope>
</reference>
<reference key="13">
    <citation type="journal article" date="2011" name="Virology">
        <title>Sites and roles of phosphorylation of the human cytomegalovirus DNA polymerase subunit UL44.</title>
        <authorList>
            <person name="Silva L.A."/>
            <person name="Strang B.L."/>
            <person name="Lin E.W."/>
            <person name="Kamil J.P."/>
            <person name="Coen D.M."/>
        </authorList>
    </citation>
    <scope>PHOSPHORYLATION AT SER-413; SER-415 AND SER-418</scope>
    <scope>SUBCELLULAR LOCATION</scope>
</reference>
<reference key="14">
    <citation type="journal article" date="2012" name="MBio">
        <title>Host cell nucleolin is required to maintain the architecture of human cytomegalovirus replication compartments.</title>
        <authorList>
            <person name="Strang B.L."/>
            <person name="Boulant S."/>
            <person name="Kirchhausen T."/>
            <person name="Coen D.M."/>
        </authorList>
    </citation>
    <scope>INTERACTION WITH HOST NCL</scope>
    <scope>FUNCTION</scope>
</reference>
<reference key="15">
    <citation type="journal article" date="2012" name="PLoS ONE">
        <title>The chromatin remodeling factor SMARCB1 forms a complex with human cytomegalovirus proteins UL114 and UL44.</title>
        <authorList>
            <person name="Ranneberg-Nilsen T."/>
            <person name="Rollag H."/>
            <person name="Slettebakk R."/>
            <person name="Backe P.H."/>
            <person name="Olsen O."/>
            <person name="Luna L."/>
            <person name="Bjoras M."/>
        </authorList>
    </citation>
    <scope>INTERACTION WITH HOST SMARCB1</scope>
</reference>
<reference key="16">
    <citation type="journal article" date="2019" name="J. Virol.">
        <title>Human Cytomegalovirus DNA Polymerase Subunit UL44 Antagonizes Antiviral Immune Responses by Suppressing IRF3- and NF-kappaB-Mediated Transcription.</title>
        <authorList>
            <person name="Fu Y.Z."/>
            <person name="Su S."/>
            <person name="Zou H.M."/>
            <person name="Guo Y."/>
            <person name="Wang S.Y."/>
            <person name="Li S."/>
            <person name="Luo M.H."/>
            <person name="Wang Y.Y."/>
        </authorList>
    </citation>
    <scope>FUNCTION</scope>
    <scope>SUBCELLULAR LOCATION</scope>
    <scope>INTERACTION WITH HOST IRF3 AND HOST RELA</scope>
</reference>
<reference key="17">
    <citation type="journal article" date="2021" name="Front. Microbiol.">
        <title>Sumoylation of the Carboxy-Terminal of Human Cytomegalovirus DNA Polymerase Processivity Factor UL44 Attenuates Viral DNA Replication.</title>
        <authorList>
            <person name="Chen J."/>
            <person name="Li G."/>
            <person name="He H."/>
            <person name="Li X."/>
            <person name="Niu W."/>
            <person name="Cao D."/>
            <person name="Shen A."/>
        </authorList>
    </citation>
    <scope>FUNCTION</scope>
    <scope>SUMOYLATION</scope>
    <scope>MUTAGENESIS OF LYS-410</scope>
    <scope>INTERACTION WITH HOST UBC9</scope>
</reference>
<reference key="18">
    <citation type="journal article" date="2004" name="Mol. Cell">
        <title>The cytomegalovirus DNA polymerase subunit UL44 forms a C clamp-shaped dimer.</title>
        <authorList>
            <person name="Appleton B.A."/>
            <person name="Loregian A."/>
            <person name="Filman D.J."/>
            <person name="Coen D.M."/>
            <person name="Hogle J.M."/>
        </authorList>
    </citation>
    <scope>X-RAY CRYSTALLOGRAPHY (1.85 ANGSTROMS) OF 1-290</scope>
</reference>
<comment type="function">
    <text evidence="5 6 8 10 11">Accessory subunit of the DNA polymerase that plays an essential role in viral DNA replication and acts by increasing the processivity of polymerization (PubMed:20538862, PubMed:20739543, PubMed:33967989). Forms dimers that binds to double-stranded DNA and UL54 specifically to stimulates long chain DNA synthesis efficiently. Plays an important role in maintaining the structure of viral replication compartments by interacting with host nucleolin/NUC (PubMed:22318319). In addition, suppresses innate immune responses through effects on host IRF3 and NF-kappa-B. Mechanistically, interfere with the binding of IRF3 and the p65 NF-kappa-B subunit to the promoters of antiviral genes, thereby inhibiting the expression of these genes (PubMed:30867312).</text>
</comment>
<comment type="subunit">
    <text evidence="2 3 4 5 8 9">Forms homodimers. Interacts with host SMARCB1. Interacts with host NCL/nucleolin; this interaction is important for the organization of proteins within viral replication compartments. Interacts with UL112/UL113; this interaction is necessary for efficient viral DNA replication. Interacts with UL84. Interacts with the uracil DNA glycosylase UL114. Interacts with the DNA polymerase catalytic subunit UL54. Interacts with host IRF3 (PubMed:30867312). Interacts with host RELA (PubMed:30867312).</text>
</comment>
<comment type="subcellular location">
    <subcellularLocation>
        <location>Virion</location>
    </subcellularLocation>
    <subcellularLocation>
        <location evidence="6 7 10">Host nucleus</location>
    </subcellularLocation>
</comment>
<comment type="domain">
    <text evidence="6">The C-terminal region is required for viral DNA synthesis.</text>
</comment>
<comment type="PTM">
    <text evidence="7">Phosphorylated by UL97 on serine residues, phosphorylation seems important for UL44 nuclear entry but does not directly affect its role in replication.</text>
</comment>
<comment type="PTM">
    <text evidence="11">Sumoylated. Sumoylation on Lys-410 increases viral DNA replication.</text>
</comment>
<comment type="similarity">
    <text evidence="12">Belongs to the herpesviridae polymerase accessory protein family.</text>
</comment>
<dbReference type="EMBL" id="X17403">
    <property type="protein sequence ID" value="CAA35403.1"/>
    <property type="molecule type" value="Genomic_DNA"/>
</dbReference>
<dbReference type="EMBL" id="BK000394">
    <property type="protein sequence ID" value="DAA00147.1"/>
    <property type="molecule type" value="Genomic_DNA"/>
</dbReference>
<dbReference type="PIR" id="S09807">
    <property type="entry name" value="QQBEV2"/>
</dbReference>
<dbReference type="PDB" id="1T6L">
    <property type="method" value="X-ray"/>
    <property type="resolution" value="1.85 A"/>
    <property type="chains" value="A=1-290"/>
</dbReference>
<dbReference type="PDB" id="1YYP">
    <property type="method" value="X-ray"/>
    <property type="resolution" value="2.50 A"/>
    <property type="chains" value="A=1-290"/>
</dbReference>
<dbReference type="PDB" id="5IWD">
    <property type="method" value="X-ray"/>
    <property type="resolution" value="2.56 A"/>
    <property type="chains" value="A=1-290"/>
</dbReference>
<dbReference type="PDB" id="5IXA">
    <property type="method" value="X-ray"/>
    <property type="resolution" value="2.68 A"/>
    <property type="chains" value="A/B=1-290"/>
</dbReference>
<dbReference type="PDB" id="8QXW">
    <property type="method" value="X-ray"/>
    <property type="resolution" value="2.00 A"/>
    <property type="chains" value="B=410-433"/>
</dbReference>
<dbReference type="PDB" id="8QXX">
    <property type="method" value="X-ray"/>
    <property type="resolution" value="1.90 A"/>
    <property type="chains" value="B=410-433"/>
</dbReference>
<dbReference type="PDB" id="8T6M">
    <property type="method" value="EM"/>
    <property type="resolution" value="3.14 A"/>
    <property type="chains" value="G=245-253"/>
</dbReference>
<dbReference type="PDB" id="8T7R">
    <property type="method" value="X-ray"/>
    <property type="resolution" value="3.84 A"/>
    <property type="chains" value="0/1/2/3/4/5/6/7/8=245-253"/>
</dbReference>
<dbReference type="PDBsum" id="1T6L"/>
<dbReference type="PDBsum" id="1YYP"/>
<dbReference type="PDBsum" id="5IWD"/>
<dbReference type="PDBsum" id="5IXA"/>
<dbReference type="PDBsum" id="8QXW"/>
<dbReference type="PDBsum" id="8QXX"/>
<dbReference type="PDBsum" id="8T6M"/>
<dbReference type="PDBsum" id="8T7R"/>
<dbReference type="SMR" id="P16790"/>
<dbReference type="DIP" id="DIP-46029N"/>
<dbReference type="ELM" id="P16790"/>
<dbReference type="IntAct" id="P16790">
    <property type="interactions" value="1"/>
</dbReference>
<dbReference type="iPTMnet" id="P16790"/>
<dbReference type="EvolutionaryTrace" id="P16790"/>
<dbReference type="Proteomes" id="UP000008991">
    <property type="component" value="Segment"/>
</dbReference>
<dbReference type="Proteomes" id="UP000008992">
    <property type="component" value="Segment"/>
</dbReference>
<dbReference type="GO" id="GO:0042025">
    <property type="term" value="C:host cell nucleus"/>
    <property type="evidence" value="ECO:0007669"/>
    <property type="project" value="UniProtKB-SubCell"/>
</dbReference>
<dbReference type="GO" id="GO:0044423">
    <property type="term" value="C:virion component"/>
    <property type="evidence" value="ECO:0007669"/>
    <property type="project" value="UniProtKB-KW"/>
</dbReference>
<dbReference type="GO" id="GO:0003677">
    <property type="term" value="F:DNA binding"/>
    <property type="evidence" value="ECO:0007669"/>
    <property type="project" value="UniProtKB-KW"/>
</dbReference>
<dbReference type="GO" id="GO:0030337">
    <property type="term" value="F:DNA polymerase processivity factor activity"/>
    <property type="evidence" value="ECO:0007669"/>
    <property type="project" value="InterPro"/>
</dbReference>
<dbReference type="GO" id="GO:0039686">
    <property type="term" value="P:bidirectional double-stranded viral DNA replication"/>
    <property type="evidence" value="ECO:0000314"/>
    <property type="project" value="UniProtKB"/>
</dbReference>
<dbReference type="GO" id="GO:0006260">
    <property type="term" value="P:DNA replication"/>
    <property type="evidence" value="ECO:0007669"/>
    <property type="project" value="UniProtKB-KW"/>
</dbReference>
<dbReference type="GO" id="GO:0039548">
    <property type="term" value="P:symbiont-mediated suppression of host cytoplasmic pattern recognition receptor signaling pathway via inhibition of IRF3 activity"/>
    <property type="evidence" value="ECO:0007669"/>
    <property type="project" value="UniProtKB-KW"/>
</dbReference>
<dbReference type="GO" id="GO:0085034">
    <property type="term" value="P:symbiont-mediated suppression of host NF-kappaB cascade"/>
    <property type="evidence" value="ECO:0007669"/>
    <property type="project" value="UniProtKB-KW"/>
</dbReference>
<dbReference type="FunFam" id="3.70.10.10:FF:000028">
    <property type="entry name" value="DNA polymerase processivity factor"/>
    <property type="match status" value="1"/>
</dbReference>
<dbReference type="Gene3D" id="3.70.10.10">
    <property type="match status" value="1"/>
</dbReference>
<dbReference type="InterPro" id="IPR046938">
    <property type="entry name" value="DNA_clamp_sf"/>
</dbReference>
<dbReference type="InterPro" id="IPR004997">
    <property type="entry name" value="Herpes_PAP"/>
</dbReference>
<dbReference type="Pfam" id="PF03325">
    <property type="entry name" value="Herpes_PAP"/>
    <property type="match status" value="1"/>
</dbReference>
<dbReference type="SUPFAM" id="SSF55979">
    <property type="entry name" value="DNA clamp"/>
    <property type="match status" value="2"/>
</dbReference>
<name>VPAP_HCMVA</name>
<protein>
    <recommendedName>
        <fullName>DNA polymerase processivity factor</fullName>
    </recommendedName>
    <alternativeName>
        <fullName>Polymerase accessory protein</fullName>
        <shortName>PAP</shortName>
    </alternativeName>
    <alternativeName>
        <fullName>Protein ICP36</fullName>
    </alternativeName>
</protein>
<accession>P16790</accession>
<accession>Q7M6P1</accession>
<organismHost>
    <name type="scientific">Homo sapiens</name>
    <name type="common">Human</name>
    <dbReference type="NCBI Taxonomy" id="9606"/>
</organismHost>
<proteinExistence type="evidence at protein level"/>
<feature type="chain" id="PRO_0000116070" description="DNA polymerase processivity factor">
    <location>
        <begin position="1"/>
        <end position="433"/>
    </location>
</feature>
<feature type="region of interest" description="Disordered" evidence="1">
    <location>
        <begin position="274"/>
        <end position="433"/>
    </location>
</feature>
<feature type="compositionally biased region" description="Gly residues" evidence="1">
    <location>
        <begin position="289"/>
        <end position="298"/>
    </location>
</feature>
<feature type="compositionally biased region" description="Gly residues" evidence="1">
    <location>
        <begin position="325"/>
        <end position="336"/>
    </location>
</feature>
<feature type="compositionally biased region" description="Gly residues" evidence="1">
    <location>
        <begin position="344"/>
        <end position="359"/>
    </location>
</feature>
<feature type="compositionally biased region" description="Basic and acidic residues" evidence="1">
    <location>
        <begin position="360"/>
        <end position="376"/>
    </location>
</feature>
<feature type="compositionally biased region" description="Gly residues" evidence="1">
    <location>
        <begin position="385"/>
        <end position="398"/>
    </location>
</feature>
<feature type="modified residue" description="Phosphoserine" evidence="7">
    <location>
        <position position="413"/>
    </location>
</feature>
<feature type="modified residue" description="Phosphoserine" evidence="7">
    <location>
        <position position="415"/>
    </location>
</feature>
<feature type="modified residue" description="Phosphoserine" evidence="7">
    <location>
        <position position="418"/>
    </location>
</feature>
<feature type="cross-link" description="Glycyl lysine isopeptide (Lys-Gly) (interchain with G-Cter in host SUMO1)" evidence="11">
    <location>
        <position position="410"/>
    </location>
</feature>
<feature type="mutagenesis site" description="Complete loss of interaction with UL54." evidence="2">
    <original>I</original>
    <variation>A</variation>
    <location>
        <position position="135"/>
    </location>
</feature>
<feature type="mutagenesis site" description="Complete loss of sumoylation and enhanced viral DNA synthesis." evidence="11">
    <original>K</original>
    <variation>A</variation>
    <location>
        <position position="410"/>
    </location>
</feature>
<feature type="strand" evidence="13">
    <location>
        <begin position="12"/>
        <end position="15"/>
    </location>
</feature>
<feature type="helix" evidence="13">
    <location>
        <begin position="17"/>
        <end position="26"/>
    </location>
</feature>
<feature type="helix" evidence="13">
    <location>
        <begin position="28"/>
        <end position="32"/>
    </location>
</feature>
<feature type="strand" evidence="13">
    <location>
        <begin position="39"/>
        <end position="43"/>
    </location>
</feature>
<feature type="turn" evidence="13">
    <location>
        <begin position="44"/>
        <end position="46"/>
    </location>
</feature>
<feature type="strand" evidence="13">
    <location>
        <begin position="47"/>
        <end position="54"/>
    </location>
</feature>
<feature type="strand" evidence="13">
    <location>
        <begin position="57"/>
        <end position="63"/>
    </location>
</feature>
<feature type="helix" evidence="13">
    <location>
        <begin position="65"/>
        <end position="67"/>
    </location>
</feature>
<feature type="strand" evidence="13">
    <location>
        <begin position="68"/>
        <end position="71"/>
    </location>
</feature>
<feature type="strand" evidence="13">
    <location>
        <begin position="78"/>
        <end position="84"/>
    </location>
</feature>
<feature type="turn" evidence="13">
    <location>
        <begin position="85"/>
        <end position="87"/>
    </location>
</feature>
<feature type="helix" evidence="13">
    <location>
        <begin position="90"/>
        <end position="93"/>
    </location>
</feature>
<feature type="strand" evidence="13">
    <location>
        <begin position="101"/>
        <end position="105"/>
    </location>
</feature>
<feature type="strand" evidence="13">
    <location>
        <begin position="109"/>
        <end position="118"/>
    </location>
</feature>
<feature type="strand" evidence="13">
    <location>
        <begin position="121"/>
        <end position="129"/>
    </location>
</feature>
<feature type="strand" evidence="14">
    <location>
        <begin position="134"/>
        <end position="136"/>
    </location>
</feature>
<feature type="strand" evidence="13">
    <location>
        <begin position="144"/>
        <end position="148"/>
    </location>
</feature>
<feature type="helix" evidence="13">
    <location>
        <begin position="150"/>
        <end position="160"/>
    </location>
</feature>
<feature type="strand" evidence="13">
    <location>
        <begin position="178"/>
        <end position="185"/>
    </location>
</feature>
<feature type="turn" evidence="13">
    <location>
        <begin position="186"/>
        <end position="189"/>
    </location>
</feature>
<feature type="strand" evidence="13">
    <location>
        <begin position="190"/>
        <end position="195"/>
    </location>
</feature>
<feature type="strand" evidence="13">
    <location>
        <begin position="200"/>
        <end position="203"/>
    </location>
</feature>
<feature type="turn" evidence="13">
    <location>
        <begin position="206"/>
        <end position="208"/>
    </location>
</feature>
<feature type="strand" evidence="13">
    <location>
        <begin position="209"/>
        <end position="213"/>
    </location>
</feature>
<feature type="strand" evidence="13">
    <location>
        <begin position="216"/>
        <end position="222"/>
    </location>
</feature>
<feature type="helix" evidence="13">
    <location>
        <begin position="223"/>
        <end position="233"/>
    </location>
</feature>
<feature type="helix" evidence="13">
    <location>
        <begin position="234"/>
        <end position="236"/>
    </location>
</feature>
<feature type="strand" evidence="13">
    <location>
        <begin position="240"/>
        <end position="257"/>
    </location>
</feature>
<feature type="strand" evidence="13">
    <location>
        <begin position="259"/>
        <end position="268"/>
    </location>
</feature>
<keyword id="KW-0002">3D-structure</keyword>
<keyword id="KW-0235">DNA replication</keyword>
<keyword id="KW-0238">DNA-binding</keyword>
<keyword id="KW-1048">Host nucleus</keyword>
<keyword id="KW-0945">Host-virus interaction</keyword>
<keyword id="KW-1090">Inhibition of host innate immune response by virus</keyword>
<keyword id="KW-1092">Inhibition of host IRF3 by virus</keyword>
<keyword id="KW-1100">Inhibition of host NF-kappa-B by virus</keyword>
<keyword id="KW-1113">Inhibition of host RLR pathway by virus</keyword>
<keyword id="KW-1017">Isopeptide bond</keyword>
<keyword id="KW-0597">Phosphoprotein</keyword>
<keyword id="KW-1185">Reference proteome</keyword>
<keyword id="KW-0832">Ubl conjugation</keyword>
<keyword id="KW-1194">Viral DNA replication</keyword>
<keyword id="KW-0899">Viral immunoevasion</keyword>
<keyword id="KW-0946">Virion</keyword>
<sequence>MDRKTRLSEPPTLALRLKPYKTAIQQLRSVIRALKENTTVTFLPTPSLILQTVRSHCVSKITFNSSCLYITDKSFQPKTINNSTPLLGNFMYLTSSKDLTKFYVQDISDLSAKISMCAPDFNMEFSSACVHGQDIVRESENSAVHVDLDFGVVADLLKWIGPHTRVKRNVKKAPCPTGTVQILVHAGPPAIKFILTNGSELEFTANNRVSFHGVKNMRINVQLKNFYQTLLNCAVTKLPCTLRIVTEHDTLLYVASRNGLFAVENFLTEEPFQRGDPFDKNYVGNSGKSRGGGGGGGSLSSLANAGGLHDDGPGLDNDLMNEPMGLGGLGGGGGGGGKKHDRGGGGGSGTRKMSSGGGGGDHDHGLSSKEKYEQHKITSYLTSKGGSGGGGGGGGGGLDRNSGNYFNDAKEESDSEDSVTFEFVPNTKKQKCG</sequence>
<organism>
    <name type="scientific">Human cytomegalovirus (strain AD169)</name>
    <name type="common">HHV-5</name>
    <name type="synonym">Human herpesvirus 5</name>
    <dbReference type="NCBI Taxonomy" id="10360"/>
    <lineage>
        <taxon>Viruses</taxon>
        <taxon>Duplodnaviria</taxon>
        <taxon>Heunggongvirae</taxon>
        <taxon>Peploviricota</taxon>
        <taxon>Herviviricetes</taxon>
        <taxon>Herpesvirales</taxon>
        <taxon>Orthoherpesviridae</taxon>
        <taxon>Betaherpesvirinae</taxon>
        <taxon>Cytomegalovirus</taxon>
        <taxon>Cytomegalovirus humanbeta5</taxon>
        <taxon>Human cytomegalovirus</taxon>
    </lineage>
</organism>